<accession>A1RV26</accession>
<comment type="function">
    <text evidence="1">Dimethylates a single guanine residue at position 26 of a number of tRNAs using S-adenosyl-L-methionine as donor of the methyl groups.</text>
</comment>
<comment type="catalytic activity">
    <reaction evidence="1">
        <text>guanosine(26) in tRNA + 2 S-adenosyl-L-methionine = N(2)-dimethylguanosine(26) in tRNA + 2 S-adenosyl-L-homocysteine + 2 H(+)</text>
        <dbReference type="Rhea" id="RHEA:43140"/>
        <dbReference type="Rhea" id="RHEA-COMP:10359"/>
        <dbReference type="Rhea" id="RHEA-COMP:10360"/>
        <dbReference type="ChEBI" id="CHEBI:15378"/>
        <dbReference type="ChEBI" id="CHEBI:57856"/>
        <dbReference type="ChEBI" id="CHEBI:59789"/>
        <dbReference type="ChEBI" id="CHEBI:74269"/>
        <dbReference type="ChEBI" id="CHEBI:74513"/>
        <dbReference type="EC" id="2.1.1.216"/>
    </reaction>
</comment>
<comment type="similarity">
    <text evidence="1">Belongs to the class I-like SAM-binding methyltransferase superfamily. Trm1 family.</text>
</comment>
<reference key="1">
    <citation type="submission" date="2006-12" db="EMBL/GenBank/DDBJ databases">
        <title>Complete sequence of Pyrobaculum islandicum DSM 4184.</title>
        <authorList>
            <person name="Copeland A."/>
            <person name="Lucas S."/>
            <person name="Lapidus A."/>
            <person name="Barry K."/>
            <person name="Detter J.C."/>
            <person name="Glavina del Rio T."/>
            <person name="Dalin E."/>
            <person name="Tice H."/>
            <person name="Pitluck S."/>
            <person name="Meincke L."/>
            <person name="Brettin T."/>
            <person name="Bruce D."/>
            <person name="Han C."/>
            <person name="Tapia R."/>
            <person name="Gilna P."/>
            <person name="Schmutz J."/>
            <person name="Larimer F."/>
            <person name="Land M."/>
            <person name="Hauser L."/>
            <person name="Kyrpides N."/>
            <person name="Mikhailova N."/>
            <person name="Cozen A.E."/>
            <person name="Fitz-Gibbon S.T."/>
            <person name="House C.H."/>
            <person name="Saltikov C."/>
            <person name="Lowe T."/>
            <person name="Richardson P."/>
        </authorList>
    </citation>
    <scope>NUCLEOTIDE SEQUENCE [LARGE SCALE GENOMIC DNA]</scope>
    <source>
        <strain>DSM 4184 / JCM 9189 / GEO3</strain>
    </source>
</reference>
<evidence type="ECO:0000255" key="1">
    <source>
        <dbReference type="HAMAP-Rule" id="MF_00290"/>
    </source>
</evidence>
<keyword id="KW-0489">Methyltransferase</keyword>
<keyword id="KW-0694">RNA-binding</keyword>
<keyword id="KW-0949">S-adenosyl-L-methionine</keyword>
<keyword id="KW-0808">Transferase</keyword>
<keyword id="KW-0819">tRNA processing</keyword>
<keyword id="KW-0820">tRNA-binding</keyword>
<sequence>MKLILNKEGAVEFYIPDPQTYRSIYSAPVFYNPSMEKNRTLSVLLLKTYGSGLTVCEPLSGTGIRGIRYAIESNAVGRLILNDISKEAVELIKKNLELNGVEGEVYNEDANVLLHKLRNTCDVVDIDPFGSPAPFLHAAFRALRDEGLICVTATDTAVLVGRYPRKCFRRYNSVIRRTPFYIELGLRNLVGYVARVAASEDFSIQPVFSYWENHYFRTCALATRGAREADDSLNNLGYIWYLKKRRKIVQTLDEHSSGPLWIGPLGDPLVVHKMSQYGVYSVFLQTLEMEYSIQAPWYFRLPEFAVDGKSPTLEKTLELLRRGGIYATRTHMSYDGFKAEANYDEIARILSI</sequence>
<name>TRM1_PYRIL</name>
<dbReference type="EC" id="2.1.1.216" evidence="1"/>
<dbReference type="EMBL" id="CP000504">
    <property type="protein sequence ID" value="ABL88808.1"/>
    <property type="molecule type" value="Genomic_DNA"/>
</dbReference>
<dbReference type="RefSeq" id="WP_011763383.1">
    <property type="nucleotide sequence ID" value="NC_008701.1"/>
</dbReference>
<dbReference type="SMR" id="A1RV26"/>
<dbReference type="STRING" id="384616.Pisl_1656"/>
<dbReference type="GeneID" id="4616909"/>
<dbReference type="KEGG" id="pis:Pisl_1656"/>
<dbReference type="eggNOG" id="arCOG01219">
    <property type="taxonomic scope" value="Archaea"/>
</dbReference>
<dbReference type="HOGENOM" id="CLU_010862_5_1_2"/>
<dbReference type="OrthoDB" id="372177at2157"/>
<dbReference type="Proteomes" id="UP000002595">
    <property type="component" value="Chromosome"/>
</dbReference>
<dbReference type="GO" id="GO:0160104">
    <property type="term" value="F:tRNA (guanine(26)-N2)-dimethyltransferase activity"/>
    <property type="evidence" value="ECO:0007669"/>
    <property type="project" value="UniProtKB-UniRule"/>
</dbReference>
<dbReference type="GO" id="GO:0000049">
    <property type="term" value="F:tRNA binding"/>
    <property type="evidence" value="ECO:0007669"/>
    <property type="project" value="UniProtKB-KW"/>
</dbReference>
<dbReference type="GO" id="GO:0002940">
    <property type="term" value="P:tRNA N2-guanine methylation"/>
    <property type="evidence" value="ECO:0007669"/>
    <property type="project" value="TreeGrafter"/>
</dbReference>
<dbReference type="CDD" id="cd02440">
    <property type="entry name" value="AdoMet_MTases"/>
    <property type="match status" value="1"/>
</dbReference>
<dbReference type="Gene3D" id="3.30.56.70">
    <property type="entry name" value="N2,N2-dimethylguanosine tRNA methyltransferase, C-terminal domain"/>
    <property type="match status" value="1"/>
</dbReference>
<dbReference type="Gene3D" id="3.40.50.150">
    <property type="entry name" value="Vaccinia Virus protein VP39"/>
    <property type="match status" value="1"/>
</dbReference>
<dbReference type="HAMAP" id="MF_00290">
    <property type="entry name" value="tRNA_dimethyltr_TRM1"/>
    <property type="match status" value="1"/>
</dbReference>
<dbReference type="InterPro" id="IPR029063">
    <property type="entry name" value="SAM-dependent_MTases_sf"/>
</dbReference>
<dbReference type="InterPro" id="IPR002905">
    <property type="entry name" value="Trm1"/>
</dbReference>
<dbReference type="InterPro" id="IPR022923">
    <property type="entry name" value="TRM1_arc_bac"/>
</dbReference>
<dbReference type="InterPro" id="IPR042296">
    <property type="entry name" value="tRNA_met_Trm1_C"/>
</dbReference>
<dbReference type="PANTHER" id="PTHR10631">
    <property type="entry name" value="N 2 ,N 2 -DIMETHYLGUANOSINE TRNA METHYLTRANSFERASE"/>
    <property type="match status" value="1"/>
</dbReference>
<dbReference type="PANTHER" id="PTHR10631:SF3">
    <property type="entry name" value="TRNA (GUANINE(26)-N(2))-DIMETHYLTRANSFERASE"/>
    <property type="match status" value="1"/>
</dbReference>
<dbReference type="Pfam" id="PF02005">
    <property type="entry name" value="TRM"/>
    <property type="match status" value="1"/>
</dbReference>
<dbReference type="SUPFAM" id="SSF53335">
    <property type="entry name" value="S-adenosyl-L-methionine-dependent methyltransferases"/>
    <property type="match status" value="1"/>
</dbReference>
<dbReference type="PROSITE" id="PS51626">
    <property type="entry name" value="SAM_MT_TRM1"/>
    <property type="match status" value="1"/>
</dbReference>
<organism>
    <name type="scientific">Pyrobaculum islandicum (strain DSM 4184 / JCM 9189 / GEO3)</name>
    <dbReference type="NCBI Taxonomy" id="384616"/>
    <lineage>
        <taxon>Archaea</taxon>
        <taxon>Thermoproteota</taxon>
        <taxon>Thermoprotei</taxon>
        <taxon>Thermoproteales</taxon>
        <taxon>Thermoproteaceae</taxon>
        <taxon>Pyrobaculum</taxon>
    </lineage>
</organism>
<proteinExistence type="inferred from homology"/>
<gene>
    <name evidence="1" type="primary">trm1</name>
    <name type="ordered locus">Pisl_1656</name>
</gene>
<feature type="chain" id="PRO_1000114982" description="tRNA (guanine(26)-N(2))-dimethyltransferase">
    <location>
        <begin position="1"/>
        <end position="352"/>
    </location>
</feature>
<feature type="domain" description="Trm1 methyltransferase" evidence="1">
    <location>
        <begin position="4"/>
        <end position="350"/>
    </location>
</feature>
<feature type="binding site" evidence="1">
    <location>
        <position position="39"/>
    </location>
    <ligand>
        <name>S-adenosyl-L-methionine</name>
        <dbReference type="ChEBI" id="CHEBI:59789"/>
    </ligand>
</feature>
<feature type="binding site" evidence="1">
    <location>
        <position position="65"/>
    </location>
    <ligand>
        <name>S-adenosyl-L-methionine</name>
        <dbReference type="ChEBI" id="CHEBI:59789"/>
    </ligand>
</feature>
<feature type="binding site" evidence="1">
    <location>
        <position position="83"/>
    </location>
    <ligand>
        <name>S-adenosyl-L-methionine</name>
        <dbReference type="ChEBI" id="CHEBI:59789"/>
    </ligand>
</feature>
<feature type="binding site" evidence="1">
    <location>
        <position position="109"/>
    </location>
    <ligand>
        <name>S-adenosyl-L-methionine</name>
        <dbReference type="ChEBI" id="CHEBI:59789"/>
    </ligand>
</feature>
<feature type="binding site" evidence="1">
    <location>
        <position position="110"/>
    </location>
    <ligand>
        <name>S-adenosyl-L-methionine</name>
        <dbReference type="ChEBI" id="CHEBI:59789"/>
    </ligand>
</feature>
<protein>
    <recommendedName>
        <fullName evidence="1">tRNA (guanine(26)-N(2))-dimethyltransferase</fullName>
        <ecNumber evidence="1">2.1.1.216</ecNumber>
    </recommendedName>
    <alternativeName>
        <fullName evidence="1">tRNA 2,2-dimethylguanosine-26 methyltransferase</fullName>
    </alternativeName>
    <alternativeName>
        <fullName evidence="1">tRNA(guanine-26,N(2)-N(2)) methyltransferase</fullName>
    </alternativeName>
    <alternativeName>
        <fullName evidence="1">tRNA(m(2,2)G26)dimethyltransferase</fullName>
    </alternativeName>
</protein>